<comment type="function">
    <text evidence="1">Following virus entry into host cell, provides nuclear import of HDV RNPs thanks to its nuclear localization signal. Needs co-infection with hepatitis B virus to provide surface proteins, otherwise there is no packaging or budding. Packages the HDV ribonucleoprotein in hepatitis B virus empty particles. Interacts with both HDV genomic RNA and cytoplasmic tail of HBsAg. May inhibit viral RNA replication (By similarity).</text>
</comment>
<comment type="subunit">
    <text evidence="1">Homodimer. Homooctamer. Interacts with HBV HBsAg. May interact with clathrin to induce virion budding (By similarity).</text>
</comment>
<comment type="subcellular location">
    <subcellularLocation>
        <location>Virion</location>
    </subcellularLocation>
    <subcellularLocation>
        <location>Host nucleus</location>
        <location>Host nucleolus</location>
    </subcellularLocation>
    <text evidence="1">isoprenylated in the cytoplasm, and translocates in the nucleus possibly after phosphorylation. Translocates after to nuclear speckle, then to the ER membrane where interaction with Hepatitis B virus antigene takes place (By similarity).</text>
</comment>
<comment type="PTM">
    <text evidence="1">Prenylated by host farnesyl-transferase in the cytoplasm prior to nucleus translocation.</text>
</comment>
<comment type="PTM">
    <text evidence="1">Phosphorylated at serines by host CK2 and other kinases. phosphorylation does not seem to be important for its function (By similarity).</text>
</comment>
<comment type="RNA editing">
    <location>
        <position position="196" evidence="7"/>
    </location>
    <text evidence="1">Partially edited. RNA editing at this position occurs on the antigenomic strand and consists of a conversion of A to G catalyzed by the cellular enzyme ADAR1. The unedited RNA version gives rise to the small delta antigen (AC P25880), which ends with a nonsense codon at position 196. In the edited version, this amber codon is modified to a tryptophan codon and gives rise to the large delta antigen protein. S-HDAg suppresses editing of non-replicating antigenomic RNA, thereby regulating the extent of editing (By similarity).</text>
</comment>
<comment type="miscellaneous">
    <text>This strain belongs to the genotype I found in North America, Europe, Africa, East and West Asia and the South Pacific.</text>
</comment>
<comment type="similarity">
    <text evidence="8">Belongs to the hepatitis delta antigen family.</text>
</comment>
<name>LHDAG_HDVNA</name>
<reference key="1">
    <citation type="journal article" date="1990" name="Virology">
        <title>Sequence conservation and divergence of hepatitis delta virus RNA.</title>
        <authorList>
            <person name="Chao Y.C."/>
            <person name="Chang M.F."/>
            <person name="Gust I."/>
            <person name="Lai M.M.C."/>
        </authorList>
    </citation>
    <scope>NUCLEOTIDE SEQUENCE [GENOMIC RNA]</scope>
    <scope>RNA EDITING</scope>
</reference>
<reference key="2">
    <citation type="journal article" date="2005" name="Acta Virol.">
        <title>Hepatitis D.</title>
        <authorList>
            <person name="Husa P."/>
            <person name="Linhartova A."/>
            <person name="Nemecek V."/>
            <person name="Husova L."/>
        </authorList>
    </citation>
    <scope>REVIEW</scope>
</reference>
<reference key="3">
    <citation type="journal article" date="2006" name="Curr. Top. Microbiol. Immunol.">
        <title>Post-translational modification of delta antigen of hepatitis D virus.</title>
        <authorList>
            <person name="Huang W.H."/>
            <person name="Chen C.W."/>
            <person name="Wu H.L."/>
            <person name="Chen P.J."/>
        </authorList>
    </citation>
    <scope>REVIEW</scope>
</reference>
<keyword id="KW-0007">Acetylation</keyword>
<keyword id="KW-1048">Host nucleus</keyword>
<keyword id="KW-0449">Lipoprotein</keyword>
<keyword id="KW-0488">Methylation</keyword>
<keyword id="KW-0597">Phosphoprotein</keyword>
<keyword id="KW-0636">Prenylation</keyword>
<keyword id="KW-0691">RNA editing</keyword>
<keyword id="KW-0694">RNA-binding</keyword>
<keyword id="KW-1163">Viral penetration into host nucleus</keyword>
<keyword id="KW-0946">Virion</keyword>
<keyword id="KW-1160">Virus entry into host cell</keyword>
<organism>
    <name type="scientific">Hepatitis delta virus genotype I (isolate Nauru)</name>
    <name type="common">HDV</name>
    <dbReference type="NCBI Taxonomy" id="10426"/>
    <lineage>
        <taxon>Viruses</taxon>
        <taxon>Ribozyviria</taxon>
        <taxon>Kolmioviridae</taxon>
        <taxon>Deltavirus</taxon>
        <taxon>Hepatitis delta virus</taxon>
    </lineage>
</organism>
<protein>
    <recommendedName>
        <fullName>Large delta antigen</fullName>
        <shortName>L-HDAg</shortName>
    </recommendedName>
    <alternativeName>
        <fullName>p27</fullName>
    </alternativeName>
</protein>
<organismHost>
    <name type="scientific">Homo sapiens</name>
    <name type="common">Human</name>
    <dbReference type="NCBI Taxonomy" id="9606"/>
</organismHost>
<evidence type="ECO:0000250" key="1"/>
<evidence type="ECO:0000250" key="2">
    <source>
        <dbReference type="UniProtKB" id="P0C6L3"/>
    </source>
</evidence>
<evidence type="ECO:0000250" key="3">
    <source>
        <dbReference type="UniProtKB" id="P29996"/>
    </source>
</evidence>
<evidence type="ECO:0000255" key="4"/>
<evidence type="ECO:0000255" key="5">
    <source>
        <dbReference type="PROSITE-ProRule" id="PRU01183"/>
    </source>
</evidence>
<evidence type="ECO:0000256" key="6">
    <source>
        <dbReference type="SAM" id="MobiDB-lite"/>
    </source>
</evidence>
<evidence type="ECO:0000269" key="7">
    <source>
    </source>
</evidence>
<evidence type="ECO:0000305" key="8"/>
<feature type="chain" id="PRO_0000038140" description="Large delta antigen">
    <location>
        <begin position="1"/>
        <end position="211"/>
    </location>
</feature>
<feature type="propeptide" id="PRO_0000396792" description="Removed in mature form" evidence="3">
    <location>
        <begin position="212"/>
        <end position="214"/>
    </location>
</feature>
<feature type="domain" description="HDAg" evidence="5">
    <location>
        <begin position="20"/>
        <end position="195"/>
    </location>
</feature>
<feature type="region of interest" description="Dimerization" evidence="4">
    <location>
        <begin position="12"/>
        <end position="60"/>
    </location>
</feature>
<feature type="region of interest" description="Disordered" evidence="6">
    <location>
        <begin position="45"/>
        <end position="214"/>
    </location>
</feature>
<feature type="region of interest" description="RNA-binding" evidence="5">
    <location>
        <begin position="97"/>
        <end position="107"/>
    </location>
</feature>
<feature type="region of interest" description="RNAPII-binding" evidence="5">
    <location>
        <begin position="130"/>
        <end position="195"/>
    </location>
</feature>
<feature type="region of interest" description="RNA-binding" evidence="5">
    <location>
        <begin position="136"/>
        <end position="146"/>
    </location>
</feature>
<feature type="short sequence motif" description="Nuclear localization signal" evidence="3">
    <location>
        <begin position="66"/>
        <end position="75"/>
    </location>
</feature>
<feature type="compositionally biased region" description="Basic and acidic residues" evidence="6">
    <location>
        <begin position="74"/>
        <end position="85"/>
    </location>
</feature>
<feature type="compositionally biased region" description="Basic and acidic residues" evidence="6">
    <location>
        <begin position="94"/>
        <end position="112"/>
    </location>
</feature>
<feature type="compositionally biased region" description="Basic and acidic residues" evidence="6">
    <location>
        <begin position="129"/>
        <end position="144"/>
    </location>
</feature>
<feature type="compositionally biased region" description="Gly residues" evidence="6">
    <location>
        <begin position="158"/>
        <end position="167"/>
    </location>
</feature>
<feature type="compositionally biased region" description="Basic and acidic residues" evidence="6">
    <location>
        <begin position="184"/>
        <end position="194"/>
    </location>
</feature>
<feature type="modified residue" description="Phosphoserine; by host" evidence="3">
    <location>
        <position position="2"/>
    </location>
</feature>
<feature type="modified residue" description="Omega-N-methylated arginine; by host" evidence="2">
    <location>
        <position position="13"/>
    </location>
</feature>
<feature type="modified residue" description="N6-acetyllysine; by host" evidence="2">
    <location>
        <position position="72"/>
    </location>
</feature>
<feature type="modified residue" description="Phosphoserine; by host" evidence="3">
    <location>
        <position position="123"/>
    </location>
</feature>
<feature type="modified residue" description="Phosphoserine; by host" evidence="3">
    <location>
        <position position="177"/>
    </location>
</feature>
<feature type="modified residue" description="Cysteine methyl ester; by host" evidence="3">
    <location>
        <position position="211"/>
    </location>
</feature>
<feature type="lipid moiety-binding region" description="S-farnesyl cysteine; by host" evidence="3">
    <location>
        <position position="211"/>
    </location>
</feature>
<dbReference type="EMBL" id="M58629">
    <property type="protein sequence ID" value="AAB59753.1"/>
    <property type="molecule type" value="Genomic_RNA"/>
</dbReference>
<dbReference type="PIR" id="A36212">
    <property type="entry name" value="SAVLDN"/>
</dbReference>
<dbReference type="SMR" id="P0C6M2"/>
<dbReference type="Proteomes" id="UP000008109">
    <property type="component" value="Genome"/>
</dbReference>
<dbReference type="GO" id="GO:0043657">
    <property type="term" value="C:host cell"/>
    <property type="evidence" value="ECO:0007669"/>
    <property type="project" value="GOC"/>
</dbReference>
<dbReference type="GO" id="GO:0044196">
    <property type="term" value="C:host cell nucleolus"/>
    <property type="evidence" value="ECO:0007669"/>
    <property type="project" value="UniProtKB-SubCell"/>
</dbReference>
<dbReference type="GO" id="GO:0044423">
    <property type="term" value="C:virion component"/>
    <property type="evidence" value="ECO:0007669"/>
    <property type="project" value="UniProtKB-KW"/>
</dbReference>
<dbReference type="GO" id="GO:0003723">
    <property type="term" value="F:RNA binding"/>
    <property type="evidence" value="ECO:0007669"/>
    <property type="project" value="UniProtKB-KW"/>
</dbReference>
<dbReference type="GO" id="GO:0046718">
    <property type="term" value="P:symbiont entry into host cell"/>
    <property type="evidence" value="ECO:0007669"/>
    <property type="project" value="UniProtKB-KW"/>
</dbReference>
<dbReference type="GO" id="GO:0075732">
    <property type="term" value="P:viral penetration into host nucleus"/>
    <property type="evidence" value="ECO:0007669"/>
    <property type="project" value="UniProtKB-KW"/>
</dbReference>
<dbReference type="Gene3D" id="4.10.220.40">
    <property type="entry name" value="Delta antigen, N-terminal"/>
    <property type="match status" value="1"/>
</dbReference>
<dbReference type="InterPro" id="IPR027403">
    <property type="entry name" value="Delta_antigen_N"/>
</dbReference>
<dbReference type="InterPro" id="IPR037517">
    <property type="entry name" value="HDAG_dom"/>
</dbReference>
<dbReference type="InterPro" id="IPR002506">
    <property type="entry name" value="HDV_ag"/>
</dbReference>
<dbReference type="Pfam" id="PF01517">
    <property type="entry name" value="HDV_ag"/>
    <property type="match status" value="1"/>
</dbReference>
<dbReference type="SUPFAM" id="SSF58108">
    <property type="entry name" value="Oligomerization domain of hepatitis delta antigen"/>
    <property type="match status" value="1"/>
</dbReference>
<dbReference type="PROSITE" id="PS51838">
    <property type="entry name" value="HDAG"/>
    <property type="match status" value="1"/>
</dbReference>
<proteinExistence type="inferred from homology"/>
<accession>P0C6M2</accession>
<sequence length="214" mass="24180">MSRSESKKNRGGREEVLEQWVAGRRKQEELERDLRKTKKKIKKLEEENPWLGNIKGILGKKDKDGEGAPPAKRARTDRMEVDSGPRKRPLRGGFTDKERQDHRRRKALENKKKQLGAGGKNLSREEEEELRRLTEEDERRERRVAGPPPGGVNPLEGGSRGAPGGGFVPNMQGVPESPFTRTGEGLDVRGDRGFPWDILFPSDPPFSPQSCRPQ</sequence>